<reference key="1">
    <citation type="journal article" date="2001" name="J. Bacteriol.">
        <title>Genome sequence and comparative analysis of the solvent-producing bacterium Clostridium acetobutylicum.</title>
        <authorList>
            <person name="Noelling J."/>
            <person name="Breton G."/>
            <person name="Omelchenko M.V."/>
            <person name="Makarova K.S."/>
            <person name="Zeng Q."/>
            <person name="Gibson R."/>
            <person name="Lee H.M."/>
            <person name="Dubois J."/>
            <person name="Qiu D."/>
            <person name="Hitti J."/>
            <person name="Wolf Y.I."/>
            <person name="Tatusov R.L."/>
            <person name="Sabathe F."/>
            <person name="Doucette-Stamm L.A."/>
            <person name="Soucaille P."/>
            <person name="Daly M.J."/>
            <person name="Bennett G.N."/>
            <person name="Koonin E.V."/>
            <person name="Smith D.R."/>
        </authorList>
    </citation>
    <scope>NUCLEOTIDE SEQUENCE [LARGE SCALE GENOMIC DNA]</scope>
    <source>
        <strain>ATCC 824 / DSM 792 / JCM 1419 / IAM 19013 / LMG 5710 / NBRC 13948 / NRRL B-527 / VKM B-1787 / 2291 / W</strain>
    </source>
</reference>
<protein>
    <recommendedName>
        <fullName evidence="1">Transcription antitermination protein NusB</fullName>
    </recommendedName>
    <alternativeName>
        <fullName evidence="1">Antitermination factor NusB</fullName>
    </alternativeName>
</protein>
<accession>Q97HC8</accession>
<organism>
    <name type="scientific">Clostridium acetobutylicum (strain ATCC 824 / DSM 792 / JCM 1419 / IAM 19013 / LMG 5710 / NBRC 13948 / NRRL B-527 / VKM B-1787 / 2291 / W)</name>
    <dbReference type="NCBI Taxonomy" id="272562"/>
    <lineage>
        <taxon>Bacteria</taxon>
        <taxon>Bacillati</taxon>
        <taxon>Bacillota</taxon>
        <taxon>Clostridia</taxon>
        <taxon>Eubacteriales</taxon>
        <taxon>Clostridiaceae</taxon>
        <taxon>Clostridium</taxon>
    </lineage>
</organism>
<comment type="function">
    <text evidence="1">Involved in transcription antitermination. Required for transcription of ribosomal RNA (rRNA) genes. Binds specifically to the boxA antiterminator sequence of the ribosomal RNA (rrn) operons.</text>
</comment>
<comment type="similarity">
    <text evidence="1">Belongs to the NusB family.</text>
</comment>
<proteinExistence type="inferred from homology"/>
<dbReference type="EMBL" id="AE001437">
    <property type="protein sequence ID" value="AAK80043.1"/>
    <property type="molecule type" value="Genomic_DNA"/>
</dbReference>
<dbReference type="PIR" id="H97156">
    <property type="entry name" value="H97156"/>
</dbReference>
<dbReference type="RefSeq" id="NP_348703.1">
    <property type="nucleotide sequence ID" value="NC_003030.1"/>
</dbReference>
<dbReference type="RefSeq" id="WP_010965384.1">
    <property type="nucleotide sequence ID" value="NC_003030.1"/>
</dbReference>
<dbReference type="SMR" id="Q97HC8"/>
<dbReference type="STRING" id="272562.CA_C2084"/>
<dbReference type="GeneID" id="44998566"/>
<dbReference type="KEGG" id="cac:CA_C2084"/>
<dbReference type="PATRIC" id="fig|272562.8.peg.2287"/>
<dbReference type="eggNOG" id="COG0781">
    <property type="taxonomic scope" value="Bacteria"/>
</dbReference>
<dbReference type="HOGENOM" id="CLU_087843_3_1_9"/>
<dbReference type="OrthoDB" id="9811381at2"/>
<dbReference type="Proteomes" id="UP000000814">
    <property type="component" value="Chromosome"/>
</dbReference>
<dbReference type="GO" id="GO:0005829">
    <property type="term" value="C:cytosol"/>
    <property type="evidence" value="ECO:0007669"/>
    <property type="project" value="TreeGrafter"/>
</dbReference>
<dbReference type="GO" id="GO:0003723">
    <property type="term" value="F:RNA binding"/>
    <property type="evidence" value="ECO:0007669"/>
    <property type="project" value="UniProtKB-UniRule"/>
</dbReference>
<dbReference type="GO" id="GO:0006353">
    <property type="term" value="P:DNA-templated transcription termination"/>
    <property type="evidence" value="ECO:0007669"/>
    <property type="project" value="UniProtKB-UniRule"/>
</dbReference>
<dbReference type="GO" id="GO:0031564">
    <property type="term" value="P:transcription antitermination"/>
    <property type="evidence" value="ECO:0007669"/>
    <property type="project" value="UniProtKB-KW"/>
</dbReference>
<dbReference type="Gene3D" id="1.10.940.10">
    <property type="entry name" value="NusB-like"/>
    <property type="match status" value="1"/>
</dbReference>
<dbReference type="HAMAP" id="MF_00073">
    <property type="entry name" value="NusB"/>
    <property type="match status" value="1"/>
</dbReference>
<dbReference type="InterPro" id="IPR035926">
    <property type="entry name" value="NusB-like_sf"/>
</dbReference>
<dbReference type="InterPro" id="IPR011605">
    <property type="entry name" value="NusB_fam"/>
</dbReference>
<dbReference type="InterPro" id="IPR006027">
    <property type="entry name" value="NusB_RsmB_TIM44"/>
</dbReference>
<dbReference type="NCBIfam" id="TIGR01951">
    <property type="entry name" value="nusB"/>
    <property type="match status" value="1"/>
</dbReference>
<dbReference type="PANTHER" id="PTHR11078:SF3">
    <property type="entry name" value="ANTITERMINATION NUSB DOMAIN-CONTAINING PROTEIN"/>
    <property type="match status" value="1"/>
</dbReference>
<dbReference type="PANTHER" id="PTHR11078">
    <property type="entry name" value="N UTILIZATION SUBSTANCE PROTEIN B-RELATED"/>
    <property type="match status" value="1"/>
</dbReference>
<dbReference type="Pfam" id="PF01029">
    <property type="entry name" value="NusB"/>
    <property type="match status" value="1"/>
</dbReference>
<dbReference type="SUPFAM" id="SSF48013">
    <property type="entry name" value="NusB-like"/>
    <property type="match status" value="1"/>
</dbReference>
<sequence length="135" mass="15753">MNRKKSREVAMKLLFEISINKNSISDTIEHYKENNEIENLDFEYIERILRGIDENMEYIDSKIEESSKKWKISRISKINITILRMAAYEIFFEKDIPCKVSANEAVELAKSYAEENSFSFVNGVIGNLINSSEEK</sequence>
<feature type="chain" id="PRO_0000176529" description="Transcription antitermination protein NusB">
    <location>
        <begin position="1"/>
        <end position="135"/>
    </location>
</feature>
<evidence type="ECO:0000255" key="1">
    <source>
        <dbReference type="HAMAP-Rule" id="MF_00073"/>
    </source>
</evidence>
<keyword id="KW-1185">Reference proteome</keyword>
<keyword id="KW-0694">RNA-binding</keyword>
<keyword id="KW-0804">Transcription</keyword>
<keyword id="KW-0889">Transcription antitermination</keyword>
<keyword id="KW-0805">Transcription regulation</keyword>
<name>NUSB_CLOAB</name>
<gene>
    <name evidence="1" type="primary">nusB</name>
    <name type="ordered locus">CA_C2084</name>
</gene>